<proteinExistence type="evidence at protein level"/>
<organism>
    <name type="scientific">Mus musculus</name>
    <name type="common">Mouse</name>
    <dbReference type="NCBI Taxonomy" id="10090"/>
    <lineage>
        <taxon>Eukaryota</taxon>
        <taxon>Metazoa</taxon>
        <taxon>Chordata</taxon>
        <taxon>Craniata</taxon>
        <taxon>Vertebrata</taxon>
        <taxon>Euteleostomi</taxon>
        <taxon>Mammalia</taxon>
        <taxon>Eutheria</taxon>
        <taxon>Euarchontoglires</taxon>
        <taxon>Glires</taxon>
        <taxon>Rodentia</taxon>
        <taxon>Myomorpha</taxon>
        <taxon>Muroidea</taxon>
        <taxon>Muridae</taxon>
        <taxon>Murinae</taxon>
        <taxon>Mus</taxon>
        <taxon>Mus</taxon>
    </lineage>
</organism>
<name>HYAS3_MOUSE</name>
<gene>
    <name type="primary">Has3</name>
</gene>
<comment type="function">
    <text evidence="3 4">Catalyzes the addition of GlcNAc or GlcUA monosaccharides to the nascent hyaluronan polymer. Therefore, it is essential to hyaluronan synthesis a major component of most extracellular matrices that has a structural role in tissues architectures and regulates cell adhesion, migration and differentiation. This is one of three isoenzymes responsible for cellular hyaluronan synthesis.</text>
</comment>
<comment type="catalytic activity">
    <reaction evidence="3 4">
        <text>[hyaluronan](n) + UDP-N-acetyl-alpha-D-glucosamine = N-acetyl-beta-D-glucosaminyl-(1-&gt;4)-[hyaluronan](n) + UDP + H(+)</text>
        <dbReference type="Rhea" id="RHEA:20465"/>
        <dbReference type="Rhea" id="RHEA-COMP:12583"/>
        <dbReference type="Rhea" id="RHEA-COMP:12585"/>
        <dbReference type="ChEBI" id="CHEBI:15378"/>
        <dbReference type="ChEBI" id="CHEBI:57705"/>
        <dbReference type="ChEBI" id="CHEBI:58223"/>
        <dbReference type="ChEBI" id="CHEBI:132153"/>
        <dbReference type="ChEBI" id="CHEBI:132154"/>
        <dbReference type="EC" id="2.4.1.212"/>
    </reaction>
    <physiologicalReaction direction="left-to-right" evidence="3">
        <dbReference type="Rhea" id="RHEA:20466"/>
    </physiologicalReaction>
</comment>
<comment type="catalytic activity">
    <reaction evidence="3 4">
        <text>N-acetyl-beta-D-glucosaminyl-(1-&gt;4)-[hyaluronan](n) + UDP-alpha-D-glucuronate = [hyaluronan](n+1) + UDP + H(+)</text>
        <dbReference type="Rhea" id="RHEA:12528"/>
        <dbReference type="Rhea" id="RHEA-COMP:12585"/>
        <dbReference type="Rhea" id="RHEA-COMP:12587"/>
        <dbReference type="ChEBI" id="CHEBI:15378"/>
        <dbReference type="ChEBI" id="CHEBI:58052"/>
        <dbReference type="ChEBI" id="CHEBI:58223"/>
        <dbReference type="ChEBI" id="CHEBI:132153"/>
        <dbReference type="ChEBI" id="CHEBI:132154"/>
        <dbReference type="EC" id="2.4.1.212"/>
    </reaction>
    <physiologicalReaction direction="left-to-right" evidence="3">
        <dbReference type="Rhea" id="RHEA:12529"/>
    </physiologicalReaction>
</comment>
<comment type="cofactor">
    <cofactor>
        <name>Mg(2+)</name>
        <dbReference type="ChEBI" id="CHEBI:18420"/>
    </cofactor>
</comment>
<comment type="biophysicochemical properties">
    <kinetics>
        <KM evidence="3">0.2 mM for UDP-Glc-NAc (at pH 7.1 and 37 degrees Celsius, in the presence of 15 mM MgCl2)</KM>
        <KM evidence="3">0.3 mM for UDP-Glc-UA (at pH 7.1 and 37 degrees Celsius, in the presence of 15 mM MgCl2)</KM>
    </kinetics>
</comment>
<comment type="pathway">
    <text evidence="3 4">Glycan biosynthesis; hyaluronan biosynthesis.</text>
</comment>
<comment type="subcellular location">
    <subcellularLocation>
        <location evidence="3 4">Cell membrane</location>
        <topology evidence="2">Multi-pass membrane protein</topology>
    </subcellularLocation>
    <subcellularLocation>
        <location evidence="4">Golgi apparatus membrane</location>
        <topology evidence="2">Multi-pass membrane protein</topology>
    </subcellularLocation>
    <subcellularLocation>
        <location evidence="4">Golgi apparatus</location>
        <location evidence="4">trans-Golgi network membrane</location>
        <topology evidence="2">Multi-pass membrane protein</topology>
    </subcellularLocation>
    <subcellularLocation>
        <location evidence="4">Cytoplasmic vesicle</location>
    </subcellularLocation>
    <text evidence="1 4">Travels through endoplasmic reticulum (ER), Golgi, plasma membrane, and endocytic vesicles (PubMed:16014622). Actives only when present in plasma membrane (PubMed:16014622). O-GlcNAcylation controls its membrane localization (By similarity). A rapid recycling of HAS3 between plasma membrane and endosomes is controlled by the cytosolic levels of UDP-GlcUA and UDP-GlcNAc (By similarity).</text>
</comment>
<comment type="developmental stage">
    <text evidence="6">Expressed at 17.5 dpc.</text>
</comment>
<comment type="PTM">
    <text evidence="1">O-GlcNAcylation increases the hyaluronan synthase activity, HAS3 stability and its plasma membrane residence. The concentration of UDP-GlcNAc controls the level of O-GlcNAc modification.</text>
</comment>
<comment type="disruption phenotype">
    <text evidence="5">Deficient mice are viable and fertile however absence of HAS3 increases the excitability of neural networks and drives the formation of epileptic seizures.</text>
</comment>
<comment type="similarity">
    <text evidence="7">Belongs to the NodC/HAS family.</text>
</comment>
<dbReference type="EC" id="2.4.1.212" evidence="3 4"/>
<dbReference type="EMBL" id="U86408">
    <property type="protein sequence ID" value="AAC53128.1"/>
    <property type="molecule type" value="mRNA"/>
</dbReference>
<dbReference type="EMBL" id="AK028582">
    <property type="protein sequence ID" value="BAC26017.1"/>
    <property type="molecule type" value="mRNA"/>
</dbReference>
<dbReference type="EMBL" id="BC138152">
    <property type="protein sequence ID" value="AAI38153.1"/>
    <property type="molecule type" value="mRNA"/>
</dbReference>
<dbReference type="CCDS" id="CCDS22640.1"/>
<dbReference type="RefSeq" id="NP_001317977.1">
    <property type="nucleotide sequence ID" value="NM_001331048.1"/>
</dbReference>
<dbReference type="RefSeq" id="NP_032243.2">
    <property type="nucleotide sequence ID" value="NM_008217.4"/>
</dbReference>
<dbReference type="RefSeq" id="XP_006530763.1">
    <property type="nucleotide sequence ID" value="XM_006530700.4"/>
</dbReference>
<dbReference type="RefSeq" id="XP_006530764.1">
    <property type="nucleotide sequence ID" value="XM_006530701.4"/>
</dbReference>
<dbReference type="SMR" id="O08650"/>
<dbReference type="FunCoup" id="O08650">
    <property type="interactions" value="130"/>
</dbReference>
<dbReference type="STRING" id="10090.ENSMUSP00000034385"/>
<dbReference type="CAZy" id="GT2">
    <property type="family name" value="Glycosyltransferase Family 2"/>
</dbReference>
<dbReference type="GlyCosmos" id="O08650">
    <property type="glycosylation" value="1 site, No reported glycans"/>
</dbReference>
<dbReference type="GlyGen" id="O08650">
    <property type="glycosylation" value="1 site"/>
</dbReference>
<dbReference type="PhosphoSitePlus" id="O08650"/>
<dbReference type="PaxDb" id="10090-ENSMUSP00000034385"/>
<dbReference type="ProteomicsDB" id="273063"/>
<dbReference type="Antibodypedia" id="29818">
    <property type="antibodies" value="264 antibodies from 32 providers"/>
</dbReference>
<dbReference type="DNASU" id="15118"/>
<dbReference type="Ensembl" id="ENSMUST00000034385.12">
    <property type="protein sequence ID" value="ENSMUSP00000034385.6"/>
    <property type="gene ID" value="ENSMUSG00000031910.15"/>
</dbReference>
<dbReference type="Ensembl" id="ENSMUST00000176144.8">
    <property type="protein sequence ID" value="ENSMUSP00000135303.2"/>
    <property type="gene ID" value="ENSMUSG00000031910.15"/>
</dbReference>
<dbReference type="GeneID" id="15118"/>
<dbReference type="KEGG" id="mmu:15118"/>
<dbReference type="UCSC" id="uc009ngn.2">
    <property type="organism name" value="mouse"/>
</dbReference>
<dbReference type="AGR" id="MGI:109599"/>
<dbReference type="CTD" id="3038"/>
<dbReference type="MGI" id="MGI:109599">
    <property type="gene designation" value="Has3"/>
</dbReference>
<dbReference type="VEuPathDB" id="HostDB:ENSMUSG00000031910"/>
<dbReference type="eggNOG" id="KOG2571">
    <property type="taxonomic scope" value="Eukaryota"/>
</dbReference>
<dbReference type="GeneTree" id="ENSGT00390000010337"/>
<dbReference type="HOGENOM" id="CLU_029695_3_0_1"/>
<dbReference type="InParanoid" id="O08650"/>
<dbReference type="OMA" id="HTEQHYL"/>
<dbReference type="OrthoDB" id="9876900at2759"/>
<dbReference type="PhylomeDB" id="O08650"/>
<dbReference type="TreeFam" id="TF332506"/>
<dbReference type="BRENDA" id="2.4.1.212">
    <property type="organism ID" value="3474"/>
</dbReference>
<dbReference type="Reactome" id="R-MMU-2142850">
    <property type="pathway name" value="Hyaluronan biosynthesis and export"/>
</dbReference>
<dbReference type="SABIO-RK" id="O08650"/>
<dbReference type="UniPathway" id="UPA00341"/>
<dbReference type="BioGRID-ORCS" id="15118">
    <property type="hits" value="2 hits in 76 CRISPR screens"/>
</dbReference>
<dbReference type="PRO" id="PR:O08650"/>
<dbReference type="Proteomes" id="UP000000589">
    <property type="component" value="Chromosome 8"/>
</dbReference>
<dbReference type="RNAct" id="O08650">
    <property type="molecule type" value="protein"/>
</dbReference>
<dbReference type="Bgee" id="ENSMUSG00000031910">
    <property type="expression patterns" value="Expressed in inner dental epithelium and 108 other cell types or tissues"/>
</dbReference>
<dbReference type="ExpressionAtlas" id="O08650">
    <property type="expression patterns" value="baseline and differential"/>
</dbReference>
<dbReference type="GO" id="GO:0005737">
    <property type="term" value="C:cytoplasm"/>
    <property type="evidence" value="ECO:0000314"/>
    <property type="project" value="CACAO"/>
</dbReference>
<dbReference type="GO" id="GO:0031410">
    <property type="term" value="C:cytoplasmic vesicle"/>
    <property type="evidence" value="ECO:0007669"/>
    <property type="project" value="UniProtKB-KW"/>
</dbReference>
<dbReference type="GO" id="GO:0000139">
    <property type="term" value="C:Golgi membrane"/>
    <property type="evidence" value="ECO:0007669"/>
    <property type="project" value="UniProtKB-SubCell"/>
</dbReference>
<dbReference type="GO" id="GO:0036117">
    <property type="term" value="C:hyaluranon cable"/>
    <property type="evidence" value="ECO:0007669"/>
    <property type="project" value="Ensembl"/>
</dbReference>
<dbReference type="GO" id="GO:0005634">
    <property type="term" value="C:nucleus"/>
    <property type="evidence" value="ECO:0000314"/>
    <property type="project" value="CACAO"/>
</dbReference>
<dbReference type="GO" id="GO:0005886">
    <property type="term" value="C:plasma membrane"/>
    <property type="evidence" value="ECO:0000314"/>
    <property type="project" value="MGI"/>
</dbReference>
<dbReference type="GO" id="GO:0050501">
    <property type="term" value="F:hyaluronan synthase activity"/>
    <property type="evidence" value="ECO:0000314"/>
    <property type="project" value="UniProtKB"/>
</dbReference>
<dbReference type="GO" id="GO:0042802">
    <property type="term" value="F:identical protein binding"/>
    <property type="evidence" value="ECO:0007669"/>
    <property type="project" value="Ensembl"/>
</dbReference>
<dbReference type="GO" id="GO:0085029">
    <property type="term" value="P:extracellular matrix assembly"/>
    <property type="evidence" value="ECO:0000314"/>
    <property type="project" value="UniProtKB"/>
</dbReference>
<dbReference type="GO" id="GO:0030213">
    <property type="term" value="P:hyaluronan biosynthetic process"/>
    <property type="evidence" value="ECO:0000314"/>
    <property type="project" value="MGI"/>
</dbReference>
<dbReference type="GO" id="GO:0000271">
    <property type="term" value="P:polysaccharide biosynthetic process"/>
    <property type="evidence" value="ECO:0000314"/>
    <property type="project" value="UniProtKB"/>
</dbReference>
<dbReference type="GO" id="GO:0045893">
    <property type="term" value="P:positive regulation of DNA-templated transcription"/>
    <property type="evidence" value="ECO:0007669"/>
    <property type="project" value="Ensembl"/>
</dbReference>
<dbReference type="GO" id="GO:1900106">
    <property type="term" value="P:positive regulation of hyaluranon cable assembly"/>
    <property type="evidence" value="ECO:0007669"/>
    <property type="project" value="Ensembl"/>
</dbReference>
<dbReference type="CDD" id="cd06434">
    <property type="entry name" value="GT2_HAS"/>
    <property type="match status" value="1"/>
</dbReference>
<dbReference type="Gene3D" id="3.90.550.10">
    <property type="entry name" value="Spore Coat Polysaccharide Biosynthesis Protein SpsA, Chain A"/>
    <property type="match status" value="1"/>
</dbReference>
<dbReference type="InterPro" id="IPR029044">
    <property type="entry name" value="Nucleotide-diphossugar_trans"/>
</dbReference>
<dbReference type="PANTHER" id="PTHR22913">
    <property type="entry name" value="HYALURONAN SYNTHASE"/>
    <property type="match status" value="1"/>
</dbReference>
<dbReference type="PANTHER" id="PTHR22913:SF6">
    <property type="entry name" value="HYALURONAN SYNTHASE 3"/>
    <property type="match status" value="1"/>
</dbReference>
<dbReference type="Pfam" id="PF13641">
    <property type="entry name" value="Glyco_tranf_2_3"/>
    <property type="match status" value="1"/>
</dbReference>
<dbReference type="SUPFAM" id="SSF53448">
    <property type="entry name" value="Nucleotide-diphospho-sugar transferases"/>
    <property type="match status" value="1"/>
</dbReference>
<sequence>MPVQLTTALRVVGTSLFALVVLGGILAAYVTGYQFIHTEKHYLSFGLYGAILGLHLLIQSLFAFLEHRRMRRAGRPLKLHCSQRPRSVALCIAAYQEDPEYLRKCLRSAQRIAFPNLKVVMVVDGNRQEDTYMLDIFHEVLGGTEQAGFFVWRSNFHEAGEGETEASLQEGMERVRAVVWASTFSCIMQKWGGKREVMYTAFKALGNSVDYIQVCDSDTVLDPACTIEMLRVLEEDPQVGGVGGDVQILNKYDSWISFLSSVRYWMAFNVERACQSYFGCVQCISGPLGMYRNSLLQQFLEDWYHQKFLGSKCSFGDDRHLTNRVLSLGYRTKYTARSKCLTETPTRYLRWLNQQTRWSKSYFREWLYNSLWFHKHHLWMTYESVVTGFFPFFLIATVIQLFYRGRIWNILLFLLTVQLVGIIKATYACFLRGNAEMIFMSLYSLLYMSSLLPAKIFAIATINKSGWGTSGRKTIVVNFIGLIPVSIWVAVLLGGLAYTAYCQDLFSETELAFLVSGAILYGCYWVALLMLYLAIIARRCGKKPEQYSLAFAEV</sequence>
<accession>O08650</accession>
<accession>Q8CEB9</accession>
<feature type="chain" id="PRO_0000197179" description="Hyaluronan synthase 3">
    <location>
        <begin position="1"/>
        <end position="554"/>
    </location>
</feature>
<feature type="topological domain" description="Cytoplasmic" evidence="2">
    <location>
        <begin position="1"/>
        <end position="15"/>
    </location>
</feature>
<feature type="transmembrane region" description="Helical; Name=1" evidence="2">
    <location>
        <begin position="16"/>
        <end position="36"/>
    </location>
</feature>
<feature type="topological domain" description="Extracellular" evidence="2">
    <location>
        <begin position="37"/>
        <end position="44"/>
    </location>
</feature>
<feature type="transmembrane region" description="Helical; Name=2" evidence="2">
    <location>
        <begin position="45"/>
        <end position="65"/>
    </location>
</feature>
<feature type="topological domain" description="Cytoplasmic" evidence="2">
    <location>
        <begin position="66"/>
        <end position="378"/>
    </location>
</feature>
<feature type="transmembrane region" description="Helical; Name=3" evidence="2">
    <location>
        <begin position="379"/>
        <end position="399"/>
    </location>
</feature>
<feature type="topological domain" description="Extracellular" evidence="2">
    <location>
        <begin position="400"/>
        <end position="409"/>
    </location>
</feature>
<feature type="transmembrane region" description="Helical; Name=4" evidence="2">
    <location>
        <begin position="410"/>
        <end position="430"/>
    </location>
</feature>
<feature type="topological domain" description="Cytoplasmic" evidence="2">
    <location>
        <begin position="431"/>
        <end position="441"/>
    </location>
</feature>
<feature type="transmembrane region" description="Helical; Name=5" evidence="2">
    <location>
        <begin position="442"/>
        <end position="462"/>
    </location>
</feature>
<feature type="topological domain" description="Extracellular" evidence="2">
    <location>
        <begin position="463"/>
        <end position="474"/>
    </location>
</feature>
<feature type="transmembrane region" description="Helical; Name=6" evidence="2">
    <location>
        <begin position="475"/>
        <end position="495"/>
    </location>
</feature>
<feature type="topological domain" description="Cytoplasmic" evidence="2">
    <location>
        <begin position="496"/>
        <end position="516"/>
    </location>
</feature>
<feature type="transmembrane region" description="Helical; Name=7" evidence="2">
    <location>
        <begin position="517"/>
        <end position="537"/>
    </location>
</feature>
<feature type="topological domain" description="Extracellular" evidence="2">
    <location>
        <begin position="538"/>
        <end position="554"/>
    </location>
</feature>
<feature type="glycosylation site" description="N-linked (GlcNAc...) asparagine" evidence="2">
    <location>
        <position position="463"/>
    </location>
</feature>
<feature type="mutagenesis site" description="Not detectable on the plasma membrane. Abolishes hyaluronan synthase activity." evidence="4">
    <original>D</original>
    <variation>A</variation>
    <location>
        <position position="216"/>
    </location>
</feature>
<feature type="sequence conflict" description="In Ref. 1; AAC53128." evidence="7" ref="1">
    <original>P</original>
    <variation>S</variation>
    <location>
        <position position="85"/>
    </location>
</feature>
<keyword id="KW-1003">Cell membrane</keyword>
<keyword id="KW-0968">Cytoplasmic vesicle</keyword>
<keyword id="KW-0325">Glycoprotein</keyword>
<keyword id="KW-0328">Glycosyltransferase</keyword>
<keyword id="KW-0333">Golgi apparatus</keyword>
<keyword id="KW-0472">Membrane</keyword>
<keyword id="KW-1185">Reference proteome</keyword>
<keyword id="KW-0808">Transferase</keyword>
<keyword id="KW-0812">Transmembrane</keyword>
<keyword id="KW-1133">Transmembrane helix</keyword>
<reference key="1">
    <citation type="journal article" date="1997" name="J. Biol. Chem.">
        <title>Molecular cloning and characterization of a cDNA encoding the third putative mammalian hyaluronan synthase.</title>
        <authorList>
            <person name="Spicer A.P."/>
            <person name="Olson J.S."/>
            <person name="McDonald J.A."/>
        </authorList>
    </citation>
    <scope>NUCLEOTIDE SEQUENCE [MRNA]</scope>
    <scope>DEVELOPMENTAL STAGE</scope>
    <source>
        <strain>129/SvJ</strain>
        <strain>C57BL/6J</strain>
    </source>
</reference>
<reference key="2">
    <citation type="journal article" date="2005" name="Science">
        <title>The transcriptional landscape of the mammalian genome.</title>
        <authorList>
            <person name="Carninci P."/>
            <person name="Kasukawa T."/>
            <person name="Katayama S."/>
            <person name="Gough J."/>
            <person name="Frith M.C."/>
            <person name="Maeda N."/>
            <person name="Oyama R."/>
            <person name="Ravasi T."/>
            <person name="Lenhard B."/>
            <person name="Wells C."/>
            <person name="Kodzius R."/>
            <person name="Shimokawa K."/>
            <person name="Bajic V.B."/>
            <person name="Brenner S.E."/>
            <person name="Batalov S."/>
            <person name="Forrest A.R."/>
            <person name="Zavolan M."/>
            <person name="Davis M.J."/>
            <person name="Wilming L.G."/>
            <person name="Aidinis V."/>
            <person name="Allen J.E."/>
            <person name="Ambesi-Impiombato A."/>
            <person name="Apweiler R."/>
            <person name="Aturaliya R.N."/>
            <person name="Bailey T.L."/>
            <person name="Bansal M."/>
            <person name="Baxter L."/>
            <person name="Beisel K.W."/>
            <person name="Bersano T."/>
            <person name="Bono H."/>
            <person name="Chalk A.M."/>
            <person name="Chiu K.P."/>
            <person name="Choudhary V."/>
            <person name="Christoffels A."/>
            <person name="Clutterbuck D.R."/>
            <person name="Crowe M.L."/>
            <person name="Dalla E."/>
            <person name="Dalrymple B.P."/>
            <person name="de Bono B."/>
            <person name="Della Gatta G."/>
            <person name="di Bernardo D."/>
            <person name="Down T."/>
            <person name="Engstrom P."/>
            <person name="Fagiolini M."/>
            <person name="Faulkner G."/>
            <person name="Fletcher C.F."/>
            <person name="Fukushima T."/>
            <person name="Furuno M."/>
            <person name="Futaki S."/>
            <person name="Gariboldi M."/>
            <person name="Georgii-Hemming P."/>
            <person name="Gingeras T.R."/>
            <person name="Gojobori T."/>
            <person name="Green R.E."/>
            <person name="Gustincich S."/>
            <person name="Harbers M."/>
            <person name="Hayashi Y."/>
            <person name="Hensch T.K."/>
            <person name="Hirokawa N."/>
            <person name="Hill D."/>
            <person name="Huminiecki L."/>
            <person name="Iacono M."/>
            <person name="Ikeo K."/>
            <person name="Iwama A."/>
            <person name="Ishikawa T."/>
            <person name="Jakt M."/>
            <person name="Kanapin A."/>
            <person name="Katoh M."/>
            <person name="Kawasawa Y."/>
            <person name="Kelso J."/>
            <person name="Kitamura H."/>
            <person name="Kitano H."/>
            <person name="Kollias G."/>
            <person name="Krishnan S.P."/>
            <person name="Kruger A."/>
            <person name="Kummerfeld S.K."/>
            <person name="Kurochkin I.V."/>
            <person name="Lareau L.F."/>
            <person name="Lazarevic D."/>
            <person name="Lipovich L."/>
            <person name="Liu J."/>
            <person name="Liuni S."/>
            <person name="McWilliam S."/>
            <person name="Madan Babu M."/>
            <person name="Madera M."/>
            <person name="Marchionni L."/>
            <person name="Matsuda H."/>
            <person name="Matsuzawa S."/>
            <person name="Miki H."/>
            <person name="Mignone F."/>
            <person name="Miyake S."/>
            <person name="Morris K."/>
            <person name="Mottagui-Tabar S."/>
            <person name="Mulder N."/>
            <person name="Nakano N."/>
            <person name="Nakauchi H."/>
            <person name="Ng P."/>
            <person name="Nilsson R."/>
            <person name="Nishiguchi S."/>
            <person name="Nishikawa S."/>
            <person name="Nori F."/>
            <person name="Ohara O."/>
            <person name="Okazaki Y."/>
            <person name="Orlando V."/>
            <person name="Pang K.C."/>
            <person name="Pavan W.J."/>
            <person name="Pavesi G."/>
            <person name="Pesole G."/>
            <person name="Petrovsky N."/>
            <person name="Piazza S."/>
            <person name="Reed J."/>
            <person name="Reid J.F."/>
            <person name="Ring B.Z."/>
            <person name="Ringwald M."/>
            <person name="Rost B."/>
            <person name="Ruan Y."/>
            <person name="Salzberg S.L."/>
            <person name="Sandelin A."/>
            <person name="Schneider C."/>
            <person name="Schoenbach C."/>
            <person name="Sekiguchi K."/>
            <person name="Semple C.A."/>
            <person name="Seno S."/>
            <person name="Sessa L."/>
            <person name="Sheng Y."/>
            <person name="Shibata Y."/>
            <person name="Shimada H."/>
            <person name="Shimada K."/>
            <person name="Silva D."/>
            <person name="Sinclair B."/>
            <person name="Sperling S."/>
            <person name="Stupka E."/>
            <person name="Sugiura K."/>
            <person name="Sultana R."/>
            <person name="Takenaka Y."/>
            <person name="Taki K."/>
            <person name="Tammoja K."/>
            <person name="Tan S.L."/>
            <person name="Tang S."/>
            <person name="Taylor M.S."/>
            <person name="Tegner J."/>
            <person name="Teichmann S.A."/>
            <person name="Ueda H.R."/>
            <person name="van Nimwegen E."/>
            <person name="Verardo R."/>
            <person name="Wei C.L."/>
            <person name="Yagi K."/>
            <person name="Yamanishi H."/>
            <person name="Zabarovsky E."/>
            <person name="Zhu S."/>
            <person name="Zimmer A."/>
            <person name="Hide W."/>
            <person name="Bult C."/>
            <person name="Grimmond S.M."/>
            <person name="Teasdale R.D."/>
            <person name="Liu E.T."/>
            <person name="Brusic V."/>
            <person name="Quackenbush J."/>
            <person name="Wahlestedt C."/>
            <person name="Mattick J.S."/>
            <person name="Hume D.A."/>
            <person name="Kai C."/>
            <person name="Sasaki D."/>
            <person name="Tomaru Y."/>
            <person name="Fukuda S."/>
            <person name="Kanamori-Katayama M."/>
            <person name="Suzuki M."/>
            <person name="Aoki J."/>
            <person name="Arakawa T."/>
            <person name="Iida J."/>
            <person name="Imamura K."/>
            <person name="Itoh M."/>
            <person name="Kato T."/>
            <person name="Kawaji H."/>
            <person name="Kawagashira N."/>
            <person name="Kawashima T."/>
            <person name="Kojima M."/>
            <person name="Kondo S."/>
            <person name="Konno H."/>
            <person name="Nakano K."/>
            <person name="Ninomiya N."/>
            <person name="Nishio T."/>
            <person name="Okada M."/>
            <person name="Plessy C."/>
            <person name="Shibata K."/>
            <person name="Shiraki T."/>
            <person name="Suzuki S."/>
            <person name="Tagami M."/>
            <person name="Waki K."/>
            <person name="Watahiki A."/>
            <person name="Okamura-Oho Y."/>
            <person name="Suzuki H."/>
            <person name="Kawai J."/>
            <person name="Hayashizaki Y."/>
        </authorList>
    </citation>
    <scope>NUCLEOTIDE SEQUENCE [LARGE SCALE MRNA]</scope>
    <source>
        <strain>C57BL/6J</strain>
        <tissue>Skin</tissue>
    </source>
</reference>
<reference key="3">
    <citation type="journal article" date="2004" name="Genome Res.">
        <title>The status, quality, and expansion of the NIH full-length cDNA project: the Mammalian Gene Collection (MGC).</title>
        <authorList>
            <consortium name="The MGC Project Team"/>
        </authorList>
    </citation>
    <scope>NUCLEOTIDE SEQUENCE [LARGE SCALE MRNA]</scope>
    <source>
        <tissue>Brain</tissue>
    </source>
</reference>
<reference key="4">
    <citation type="journal article" date="1999" name="J. Biol. Chem.">
        <title>Three isoforms of mammalian hyaluronan synthases have distinct enzymatic properties.</title>
        <authorList>
            <person name="Itano N."/>
            <person name="Sawai T."/>
            <person name="Yoshida M."/>
            <person name="Lenas P."/>
            <person name="Yamada Y."/>
            <person name="Imagawa M."/>
            <person name="Shinomura T."/>
            <person name="Hamaguchi M."/>
            <person name="Yoshida Y."/>
            <person name="Ohnuki Y."/>
            <person name="Miyauchi S."/>
            <person name="Spicer A.P."/>
            <person name="McDonald J.A."/>
            <person name="Kimata K."/>
        </authorList>
    </citation>
    <scope>FUNCTION</scope>
    <scope>CATALYTIC ACTIVITY</scope>
    <scope>BIOPHYSICOCHEMICAL PROPERTIES</scope>
    <scope>SUBCELLULAR LOCATION</scope>
</reference>
<reference key="5">
    <citation type="journal article" date="2005" name="J. Biol. Chem.">
        <title>Plasma membrane residence of hyaluronan synthase is coupled to its enzymatic activity.</title>
        <authorList>
            <person name="Rilla K."/>
            <person name="Siiskonen H."/>
            <person name="Spicer A.P."/>
            <person name="Hyttinen J.M."/>
            <person name="Tammi M.I."/>
            <person name="Tammi R.H."/>
        </authorList>
    </citation>
    <scope>SUBCELLULAR LOCATION</scope>
    <scope>FUNCTION</scope>
    <scope>CATALYTIC ACTIVITY</scope>
    <scope>MUTAGENESIS OF ASP-216</scope>
</reference>
<reference key="6">
    <citation type="journal article" date="2014" name="J. Neurosci.">
        <title>Hyaluronan deficiency due to Has3 knock-out causes altered neuronal activity and seizures via reduction in brain extracellular space.</title>
        <authorList>
            <person name="Arranz A.M."/>
            <person name="Perkins K.L."/>
            <person name="Irie F."/>
            <person name="Lewis D.P."/>
            <person name="Hrabe J."/>
            <person name="Xiao F."/>
            <person name="Itano N."/>
            <person name="Kimata K."/>
            <person name="Hrabetova S."/>
            <person name="Yamaguchi Y."/>
        </authorList>
    </citation>
    <scope>DISRUPTION PHENOTYPE</scope>
</reference>
<protein>
    <recommendedName>
        <fullName>Hyaluronan synthase 3</fullName>
        <ecNumber evidence="3 4">2.4.1.212</ecNumber>
    </recommendedName>
    <alternativeName>
        <fullName>Hyaluronate synthase 3</fullName>
    </alternativeName>
    <alternativeName>
        <fullName>Hyaluronic acid synthase 3</fullName>
        <shortName>HA synthase 3</shortName>
    </alternativeName>
</protein>
<evidence type="ECO:0000250" key="1">
    <source>
        <dbReference type="UniProtKB" id="O00219"/>
    </source>
</evidence>
<evidence type="ECO:0000255" key="2"/>
<evidence type="ECO:0000269" key="3">
    <source>
    </source>
</evidence>
<evidence type="ECO:0000269" key="4">
    <source>
    </source>
</evidence>
<evidence type="ECO:0000269" key="5">
    <source>
    </source>
</evidence>
<evidence type="ECO:0000269" key="6">
    <source>
    </source>
</evidence>
<evidence type="ECO:0000305" key="7"/>